<accession>P13293</accession>
<proteinExistence type="inferred from homology"/>
<name>GJ_HHV2H</name>
<evidence type="ECO:0000250" key="1"/>
<evidence type="ECO:0000255" key="2"/>
<evidence type="ECO:0000269" key="3">
    <source>
    </source>
</evidence>
<evidence type="ECO:0000305" key="4"/>
<dbReference type="EMBL" id="X04798">
    <property type="protein sequence ID" value="CAA28491.1"/>
    <property type="molecule type" value="Genomic_DNA"/>
</dbReference>
<dbReference type="EMBL" id="Z86099">
    <property type="protein sequence ID" value="CAB06712.1"/>
    <property type="molecule type" value="Genomic_DNA"/>
</dbReference>
<dbReference type="PIR" id="D43674">
    <property type="entry name" value="D43674"/>
</dbReference>
<dbReference type="RefSeq" id="YP_009137217.1">
    <property type="nucleotide sequence ID" value="NC_001798.2"/>
</dbReference>
<dbReference type="SMR" id="P13293"/>
<dbReference type="GlyCosmos" id="P13293">
    <property type="glycosylation" value="1 site, No reported glycans"/>
</dbReference>
<dbReference type="DNASU" id="1487357"/>
<dbReference type="GeneID" id="1487357"/>
<dbReference type="KEGG" id="vg:1487357"/>
<dbReference type="Proteomes" id="UP000001874">
    <property type="component" value="Segment"/>
</dbReference>
<dbReference type="GO" id="GO:0044167">
    <property type="term" value="C:host cell endoplasmic reticulum membrane"/>
    <property type="evidence" value="ECO:0007669"/>
    <property type="project" value="UniProtKB-SubCell"/>
</dbReference>
<dbReference type="GO" id="GO:0044175">
    <property type="term" value="C:host cell endosome membrane"/>
    <property type="evidence" value="ECO:0007669"/>
    <property type="project" value="UniProtKB-SubCell"/>
</dbReference>
<dbReference type="GO" id="GO:0044178">
    <property type="term" value="C:host cell Golgi membrane"/>
    <property type="evidence" value="ECO:0007669"/>
    <property type="project" value="UniProtKB-SubCell"/>
</dbReference>
<dbReference type="GO" id="GO:0016020">
    <property type="term" value="C:membrane"/>
    <property type="evidence" value="ECO:0007669"/>
    <property type="project" value="UniProtKB-KW"/>
</dbReference>
<feature type="signal peptide" evidence="2">
    <location>
        <begin position="1"/>
        <end position="22"/>
    </location>
</feature>
<feature type="chain" id="PRO_0000115790" description="Envelope glycoprotein J">
    <location>
        <begin position="23"/>
        <end position="92"/>
    </location>
</feature>
<feature type="topological domain" description="Extracellular" evidence="2">
    <location>
        <begin position="23"/>
        <end position="49"/>
    </location>
</feature>
<feature type="transmembrane region" description="Helical" evidence="2">
    <location>
        <begin position="50"/>
        <end position="70"/>
    </location>
</feature>
<feature type="topological domain" description="Cytoplasmic" evidence="2">
    <location>
        <begin position="71"/>
        <end position="92"/>
    </location>
</feature>
<feature type="glycosylation site" description="N-linked (GlcNAc...) asparagine; by host" evidence="2">
    <location>
        <position position="33"/>
    </location>
</feature>
<comment type="function">
    <text evidence="3">Functions as an activator of viral protein expression and virus production. In turn, promotes cell-to-cell spread as well as syncytia formation.</text>
</comment>
<comment type="subcellular location">
    <subcellularLocation>
        <location evidence="4">Host Golgi apparatus membrane</location>
        <topology evidence="4">Single-pass type I membrane protein</topology>
    </subcellularLocation>
    <subcellularLocation>
        <location evidence="4">Host endoplasmic reticulum membrane</location>
        <topology evidence="4">Single-pass type I membrane protein</topology>
    </subcellularLocation>
    <subcellularLocation>
        <location evidence="4">Host endosome membrane</location>
        <topology evidence="4">Single-pass type I membrane protein</topology>
    </subcellularLocation>
    <text evidence="1">Localizes to the endoplasmic reticulum, trans-Golgi network, and early endosomes.</text>
</comment>
<comment type="disruption phenotype">
    <text evidence="3">Knockout mutant significantly impairs plaque and syncytia formation and decreases virus production.</text>
</comment>
<comment type="similarity">
    <text evidence="4">Belongs to the alphaherpesvirinae glycoprotein J family.</text>
</comment>
<reference key="1">
    <citation type="journal article" date="1987" name="J. Gen. Virol.">
        <title>DNA sequence and genetic content of the HindIII l region in the short unique component of the herpes simplex virus type 2 genome: identification of the gene encoding glycoprotein G, and evolutionary comparisons.</title>
        <authorList>
            <person name="McGeoch D.J."/>
            <person name="Moss H.W.M."/>
            <person name="McNab D."/>
            <person name="Frame M.C."/>
        </authorList>
    </citation>
    <scope>NUCLEOTIDE SEQUENCE [GENOMIC DNA]</scope>
</reference>
<reference key="2">
    <citation type="journal article" date="1998" name="J. Virol.">
        <title>The genome sequence of herpes simplex virus type 2.</title>
        <authorList>
            <person name="Dolan A."/>
            <person name="Jamieson F.E."/>
            <person name="Cunningham C."/>
            <person name="Barnett B.C."/>
            <person name="McGeoch D.J."/>
        </authorList>
    </citation>
    <scope>NUCLEOTIDE SEQUENCE [LARGE SCALE GENOMIC DNA]</scope>
</reference>
<reference key="3">
    <citation type="journal article" date="2018" name="Virology">
        <title>HSV-2 glycoprotein J promotes viral protein expression and virus spread.</title>
        <authorList>
            <person name="Liu Y."/>
            <person name="Guan X."/>
            <person name="Li C."/>
            <person name="Ni F."/>
            <person name="Luo S."/>
            <person name="Wang J."/>
            <person name="Zhang D."/>
            <person name="Zhang M."/>
            <person name="Hu Q."/>
        </authorList>
    </citation>
    <scope>FUNCTION</scope>
    <scope>DISRUPTION PHENOTYPE</scope>
</reference>
<organismHost>
    <name type="scientific">Homo sapiens</name>
    <name type="common">Human</name>
    <dbReference type="NCBI Taxonomy" id="9606"/>
</organismHost>
<organism>
    <name type="scientific">Human herpesvirus 2 (strain HG52)</name>
    <name type="common">HHV-2</name>
    <name type="synonym">Human herpes simplex virus 2</name>
    <dbReference type="NCBI Taxonomy" id="10315"/>
    <lineage>
        <taxon>Viruses</taxon>
        <taxon>Duplodnaviria</taxon>
        <taxon>Heunggongvirae</taxon>
        <taxon>Peploviricota</taxon>
        <taxon>Herviviricetes</taxon>
        <taxon>Herpesvirales</taxon>
        <taxon>Orthoherpesviridae</taxon>
        <taxon>Alphaherpesvirinae</taxon>
        <taxon>Simplexvirus</taxon>
        <taxon>Simplexvirus humanalpha2</taxon>
        <taxon>Human herpesvirus 2</taxon>
    </lineage>
</organism>
<sequence length="92" mass="9510">MDRYAVRTWGIVGILGCAAVGAAPTGPASDTTNATARLPTHPPLIRSGGFAVPLIVGGLCLMILGMACLLEVLRRLGRELARCCPHAGQFAP</sequence>
<keyword id="KW-0325">Glycoprotein</keyword>
<keyword id="KW-1038">Host endoplasmic reticulum</keyword>
<keyword id="KW-1039">Host endosome</keyword>
<keyword id="KW-1040">Host Golgi apparatus</keyword>
<keyword id="KW-1043">Host membrane</keyword>
<keyword id="KW-0472">Membrane</keyword>
<keyword id="KW-1185">Reference proteome</keyword>
<keyword id="KW-0732">Signal</keyword>
<keyword id="KW-0812">Transmembrane</keyword>
<keyword id="KW-1133">Transmembrane helix</keyword>
<protein>
    <recommendedName>
        <fullName>Envelope glycoprotein J</fullName>
    </recommendedName>
</protein>
<gene>
    <name type="primary">gJ</name>
    <name type="ORF">US5</name>
</gene>